<proteinExistence type="inferred from homology"/>
<gene>
    <name evidence="1" type="primary">rpsO</name>
    <name type="ordered locus">Suden_0726</name>
</gene>
<feature type="chain" id="PRO_0000255547" description="Small ribosomal subunit protein uS15">
    <location>
        <begin position="1"/>
        <end position="91"/>
    </location>
</feature>
<evidence type="ECO:0000255" key="1">
    <source>
        <dbReference type="HAMAP-Rule" id="MF_01343"/>
    </source>
</evidence>
<evidence type="ECO:0000305" key="2"/>
<sequence>MALDSAKKQEIVTKFGRGENDTGSSEVQIALLTKRISDLTEHLKVFKKDHASRLGLLKLVGQRRRLMRYFKRKDKDAYLKLVAELGIRDNI</sequence>
<keyword id="KW-1185">Reference proteome</keyword>
<keyword id="KW-0687">Ribonucleoprotein</keyword>
<keyword id="KW-0689">Ribosomal protein</keyword>
<keyword id="KW-0694">RNA-binding</keyword>
<keyword id="KW-0699">rRNA-binding</keyword>
<comment type="function">
    <text evidence="1">One of the primary rRNA binding proteins, it binds directly to 16S rRNA where it helps nucleate assembly of the platform of the 30S subunit by binding and bridging several RNA helices of the 16S rRNA.</text>
</comment>
<comment type="function">
    <text evidence="1">Forms an intersubunit bridge (bridge B4) with the 23S rRNA of the 50S subunit in the ribosome.</text>
</comment>
<comment type="subunit">
    <text evidence="1">Part of the 30S ribosomal subunit. Forms a bridge to the 50S subunit in the 70S ribosome, contacting the 23S rRNA.</text>
</comment>
<comment type="similarity">
    <text evidence="1">Belongs to the universal ribosomal protein uS15 family.</text>
</comment>
<dbReference type="EMBL" id="CP000153">
    <property type="protein sequence ID" value="ABB44005.1"/>
    <property type="molecule type" value="Genomic_DNA"/>
</dbReference>
<dbReference type="RefSeq" id="WP_011372359.1">
    <property type="nucleotide sequence ID" value="NC_007575.1"/>
</dbReference>
<dbReference type="SMR" id="Q30SM6"/>
<dbReference type="STRING" id="326298.Suden_0726"/>
<dbReference type="KEGG" id="tdn:Suden_0726"/>
<dbReference type="eggNOG" id="COG0184">
    <property type="taxonomic scope" value="Bacteria"/>
</dbReference>
<dbReference type="HOGENOM" id="CLU_148518_0_0_7"/>
<dbReference type="OrthoDB" id="9799262at2"/>
<dbReference type="Proteomes" id="UP000002714">
    <property type="component" value="Chromosome"/>
</dbReference>
<dbReference type="GO" id="GO:0022627">
    <property type="term" value="C:cytosolic small ribosomal subunit"/>
    <property type="evidence" value="ECO:0007669"/>
    <property type="project" value="TreeGrafter"/>
</dbReference>
<dbReference type="GO" id="GO:0019843">
    <property type="term" value="F:rRNA binding"/>
    <property type="evidence" value="ECO:0007669"/>
    <property type="project" value="UniProtKB-UniRule"/>
</dbReference>
<dbReference type="GO" id="GO:0003735">
    <property type="term" value="F:structural constituent of ribosome"/>
    <property type="evidence" value="ECO:0007669"/>
    <property type="project" value="InterPro"/>
</dbReference>
<dbReference type="GO" id="GO:0006412">
    <property type="term" value="P:translation"/>
    <property type="evidence" value="ECO:0007669"/>
    <property type="project" value="UniProtKB-UniRule"/>
</dbReference>
<dbReference type="CDD" id="cd00353">
    <property type="entry name" value="Ribosomal_S15p_S13e"/>
    <property type="match status" value="1"/>
</dbReference>
<dbReference type="FunFam" id="1.10.287.10:FF:000002">
    <property type="entry name" value="30S ribosomal protein S15"/>
    <property type="match status" value="1"/>
</dbReference>
<dbReference type="Gene3D" id="6.10.250.3130">
    <property type="match status" value="1"/>
</dbReference>
<dbReference type="Gene3D" id="1.10.287.10">
    <property type="entry name" value="S15/NS1, RNA-binding"/>
    <property type="match status" value="1"/>
</dbReference>
<dbReference type="HAMAP" id="MF_01343_B">
    <property type="entry name" value="Ribosomal_uS15_B"/>
    <property type="match status" value="1"/>
</dbReference>
<dbReference type="InterPro" id="IPR000589">
    <property type="entry name" value="Ribosomal_uS15"/>
</dbReference>
<dbReference type="InterPro" id="IPR005290">
    <property type="entry name" value="Ribosomal_uS15_bac-type"/>
</dbReference>
<dbReference type="InterPro" id="IPR009068">
    <property type="entry name" value="uS15_NS1_RNA-bd_sf"/>
</dbReference>
<dbReference type="NCBIfam" id="TIGR00952">
    <property type="entry name" value="S15_bact"/>
    <property type="match status" value="1"/>
</dbReference>
<dbReference type="PANTHER" id="PTHR23321">
    <property type="entry name" value="RIBOSOMAL PROTEIN S15, BACTERIAL AND ORGANELLAR"/>
    <property type="match status" value="1"/>
</dbReference>
<dbReference type="PANTHER" id="PTHR23321:SF26">
    <property type="entry name" value="SMALL RIBOSOMAL SUBUNIT PROTEIN US15M"/>
    <property type="match status" value="1"/>
</dbReference>
<dbReference type="Pfam" id="PF00312">
    <property type="entry name" value="Ribosomal_S15"/>
    <property type="match status" value="1"/>
</dbReference>
<dbReference type="SMART" id="SM01387">
    <property type="entry name" value="Ribosomal_S15"/>
    <property type="match status" value="1"/>
</dbReference>
<dbReference type="SUPFAM" id="SSF47060">
    <property type="entry name" value="S15/NS1 RNA-binding domain"/>
    <property type="match status" value="1"/>
</dbReference>
<dbReference type="PROSITE" id="PS00362">
    <property type="entry name" value="RIBOSOMAL_S15"/>
    <property type="match status" value="1"/>
</dbReference>
<accession>Q30SM6</accession>
<name>RS15_SULDN</name>
<reference key="1">
    <citation type="journal article" date="2008" name="Appl. Environ. Microbiol.">
        <title>Genome of the epsilonproteobacterial chemolithoautotroph Sulfurimonas denitrificans.</title>
        <authorList>
            <person name="Sievert S.M."/>
            <person name="Scott K.M."/>
            <person name="Klotz M.G."/>
            <person name="Chain P.S.G."/>
            <person name="Hauser L.J."/>
            <person name="Hemp J."/>
            <person name="Huegler M."/>
            <person name="Land M."/>
            <person name="Lapidus A."/>
            <person name="Larimer F.W."/>
            <person name="Lucas S."/>
            <person name="Malfatti S.A."/>
            <person name="Meyer F."/>
            <person name="Paulsen I.T."/>
            <person name="Ren Q."/>
            <person name="Simon J."/>
            <person name="Bailey K."/>
            <person name="Diaz E."/>
            <person name="Fitzpatrick K.A."/>
            <person name="Glover B."/>
            <person name="Gwatney N."/>
            <person name="Korajkic A."/>
            <person name="Long A."/>
            <person name="Mobberley J.M."/>
            <person name="Pantry S.N."/>
            <person name="Pazder G."/>
            <person name="Peterson S."/>
            <person name="Quintanilla J.D."/>
            <person name="Sprinkle R."/>
            <person name="Stephens J."/>
            <person name="Thomas P."/>
            <person name="Vaughn R."/>
            <person name="Weber M.J."/>
            <person name="Wooten L.L."/>
        </authorList>
    </citation>
    <scope>NUCLEOTIDE SEQUENCE [LARGE SCALE GENOMIC DNA]</scope>
    <source>
        <strain>ATCC 33889 / DSM 1251</strain>
    </source>
</reference>
<organism>
    <name type="scientific">Sulfurimonas denitrificans (strain ATCC 33889 / DSM 1251)</name>
    <name type="common">Thiomicrospira denitrificans (strain ATCC 33889 / DSM 1251)</name>
    <dbReference type="NCBI Taxonomy" id="326298"/>
    <lineage>
        <taxon>Bacteria</taxon>
        <taxon>Pseudomonadati</taxon>
        <taxon>Campylobacterota</taxon>
        <taxon>Epsilonproteobacteria</taxon>
        <taxon>Campylobacterales</taxon>
        <taxon>Sulfurimonadaceae</taxon>
        <taxon>Sulfurimonas</taxon>
    </lineage>
</organism>
<protein>
    <recommendedName>
        <fullName evidence="1">Small ribosomal subunit protein uS15</fullName>
    </recommendedName>
    <alternativeName>
        <fullName evidence="2">30S ribosomal protein S15</fullName>
    </alternativeName>
</protein>